<gene>
    <name evidence="1" type="primary">pfkA</name>
    <name type="ordered locus">BAMEG_4875</name>
</gene>
<reference key="1">
    <citation type="submission" date="2008-10" db="EMBL/GenBank/DDBJ databases">
        <title>Genome sequence of Bacillus anthracis str. CDC 684.</title>
        <authorList>
            <person name="Dodson R.J."/>
            <person name="Munk A.C."/>
            <person name="Brettin T."/>
            <person name="Bruce D."/>
            <person name="Detter C."/>
            <person name="Tapia R."/>
            <person name="Han C."/>
            <person name="Sutton G."/>
            <person name="Sims D."/>
        </authorList>
    </citation>
    <scope>NUCLEOTIDE SEQUENCE [LARGE SCALE GENOMIC DNA]</scope>
    <source>
        <strain>CDC 684 / NRRL 3495</strain>
    </source>
</reference>
<sequence length="319" mass="34308">MKRIGVLTSGGDSPGMNAAIRAVVRKAIFHDIEVYGIYHGYAGLISGHIEKLELGSVGDIIHRGGTKLYTARCPEFKDPEVRLKGIEQLKKHGIEGLVVIGGDGSYQGAKKLTEQGFPCVGVPGTIDNDIPGTDFTIGFDTALNTVIDAIDKIRDTATSHERTYVIEVMGRHAGDIALWAGLADGAETILIPEEEYDMEDVIARLKRGSERGKKHSIIVVAEGVGSAIDIGKHIEEATNFDTRVTVLGHVQRGGSPSAQDRVLASRLGARAVELLIAGKGGRCVGIQDNKLVDHDIIEALAQKHTIDKDMYQLSKELSI</sequence>
<protein>
    <recommendedName>
        <fullName evidence="1">ATP-dependent 6-phosphofructokinase</fullName>
        <shortName evidence="1">ATP-PFK</shortName>
        <shortName evidence="1">Phosphofructokinase</shortName>
        <ecNumber evidence="1">2.7.1.11</ecNumber>
    </recommendedName>
    <alternativeName>
        <fullName evidence="1">Phosphohexokinase</fullName>
    </alternativeName>
</protein>
<dbReference type="EC" id="2.7.1.11" evidence="1"/>
<dbReference type="EMBL" id="CP001215">
    <property type="protein sequence ID" value="ACP17214.1"/>
    <property type="molecule type" value="Genomic_DNA"/>
</dbReference>
<dbReference type="RefSeq" id="WP_000821163.1">
    <property type="nucleotide sequence ID" value="NC_012581.1"/>
</dbReference>
<dbReference type="SMR" id="C3L8X8"/>
<dbReference type="GeneID" id="93006511"/>
<dbReference type="KEGG" id="bah:BAMEG_4875"/>
<dbReference type="HOGENOM" id="CLU_020655_0_1_9"/>
<dbReference type="UniPathway" id="UPA00109">
    <property type="reaction ID" value="UER00182"/>
</dbReference>
<dbReference type="GO" id="GO:0005945">
    <property type="term" value="C:6-phosphofructokinase complex"/>
    <property type="evidence" value="ECO:0007669"/>
    <property type="project" value="TreeGrafter"/>
</dbReference>
<dbReference type="GO" id="GO:0003872">
    <property type="term" value="F:6-phosphofructokinase activity"/>
    <property type="evidence" value="ECO:0007669"/>
    <property type="project" value="UniProtKB-UniRule"/>
</dbReference>
<dbReference type="GO" id="GO:0016208">
    <property type="term" value="F:AMP binding"/>
    <property type="evidence" value="ECO:0007669"/>
    <property type="project" value="TreeGrafter"/>
</dbReference>
<dbReference type="GO" id="GO:0005524">
    <property type="term" value="F:ATP binding"/>
    <property type="evidence" value="ECO:0007669"/>
    <property type="project" value="UniProtKB-KW"/>
</dbReference>
<dbReference type="GO" id="GO:0070095">
    <property type="term" value="F:fructose-6-phosphate binding"/>
    <property type="evidence" value="ECO:0007669"/>
    <property type="project" value="TreeGrafter"/>
</dbReference>
<dbReference type="GO" id="GO:0042802">
    <property type="term" value="F:identical protein binding"/>
    <property type="evidence" value="ECO:0007669"/>
    <property type="project" value="TreeGrafter"/>
</dbReference>
<dbReference type="GO" id="GO:0046872">
    <property type="term" value="F:metal ion binding"/>
    <property type="evidence" value="ECO:0007669"/>
    <property type="project" value="UniProtKB-KW"/>
</dbReference>
<dbReference type="GO" id="GO:0048029">
    <property type="term" value="F:monosaccharide binding"/>
    <property type="evidence" value="ECO:0007669"/>
    <property type="project" value="TreeGrafter"/>
</dbReference>
<dbReference type="GO" id="GO:0061621">
    <property type="term" value="P:canonical glycolysis"/>
    <property type="evidence" value="ECO:0007669"/>
    <property type="project" value="TreeGrafter"/>
</dbReference>
<dbReference type="GO" id="GO:0030388">
    <property type="term" value="P:fructose 1,6-bisphosphate metabolic process"/>
    <property type="evidence" value="ECO:0007669"/>
    <property type="project" value="TreeGrafter"/>
</dbReference>
<dbReference type="GO" id="GO:0006002">
    <property type="term" value="P:fructose 6-phosphate metabolic process"/>
    <property type="evidence" value="ECO:0007669"/>
    <property type="project" value="InterPro"/>
</dbReference>
<dbReference type="CDD" id="cd00763">
    <property type="entry name" value="Bacterial_PFK"/>
    <property type="match status" value="1"/>
</dbReference>
<dbReference type="FunFam" id="3.40.50.450:FF:000001">
    <property type="entry name" value="ATP-dependent 6-phosphofructokinase"/>
    <property type="match status" value="1"/>
</dbReference>
<dbReference type="FunFam" id="3.40.50.460:FF:000002">
    <property type="entry name" value="ATP-dependent 6-phosphofructokinase"/>
    <property type="match status" value="1"/>
</dbReference>
<dbReference type="Gene3D" id="3.40.50.450">
    <property type="match status" value="1"/>
</dbReference>
<dbReference type="Gene3D" id="3.40.50.460">
    <property type="entry name" value="Phosphofructokinase domain"/>
    <property type="match status" value="1"/>
</dbReference>
<dbReference type="HAMAP" id="MF_00339">
    <property type="entry name" value="Phosphofructokinase_I_B1"/>
    <property type="match status" value="1"/>
</dbReference>
<dbReference type="InterPro" id="IPR022953">
    <property type="entry name" value="ATP_PFK"/>
</dbReference>
<dbReference type="InterPro" id="IPR012003">
    <property type="entry name" value="ATP_PFK_prok-type"/>
</dbReference>
<dbReference type="InterPro" id="IPR012828">
    <property type="entry name" value="PFKA_ATP_prok"/>
</dbReference>
<dbReference type="InterPro" id="IPR015912">
    <property type="entry name" value="Phosphofructokinase_CS"/>
</dbReference>
<dbReference type="InterPro" id="IPR000023">
    <property type="entry name" value="Phosphofructokinase_dom"/>
</dbReference>
<dbReference type="InterPro" id="IPR035966">
    <property type="entry name" value="PKF_sf"/>
</dbReference>
<dbReference type="NCBIfam" id="TIGR02482">
    <property type="entry name" value="PFKA_ATP"/>
    <property type="match status" value="1"/>
</dbReference>
<dbReference type="NCBIfam" id="NF002872">
    <property type="entry name" value="PRK03202.1"/>
    <property type="match status" value="1"/>
</dbReference>
<dbReference type="PANTHER" id="PTHR13697:SF4">
    <property type="entry name" value="ATP-DEPENDENT 6-PHOSPHOFRUCTOKINASE"/>
    <property type="match status" value="1"/>
</dbReference>
<dbReference type="PANTHER" id="PTHR13697">
    <property type="entry name" value="PHOSPHOFRUCTOKINASE"/>
    <property type="match status" value="1"/>
</dbReference>
<dbReference type="Pfam" id="PF00365">
    <property type="entry name" value="PFK"/>
    <property type="match status" value="1"/>
</dbReference>
<dbReference type="PIRSF" id="PIRSF000532">
    <property type="entry name" value="ATP_PFK_prok"/>
    <property type="match status" value="1"/>
</dbReference>
<dbReference type="PRINTS" id="PR00476">
    <property type="entry name" value="PHFRCTKINASE"/>
</dbReference>
<dbReference type="SUPFAM" id="SSF53784">
    <property type="entry name" value="Phosphofructokinase"/>
    <property type="match status" value="1"/>
</dbReference>
<dbReference type="PROSITE" id="PS00433">
    <property type="entry name" value="PHOSPHOFRUCTOKINASE"/>
    <property type="match status" value="1"/>
</dbReference>
<organism>
    <name type="scientific">Bacillus anthracis (strain CDC 684 / NRRL 3495)</name>
    <dbReference type="NCBI Taxonomy" id="568206"/>
    <lineage>
        <taxon>Bacteria</taxon>
        <taxon>Bacillati</taxon>
        <taxon>Bacillota</taxon>
        <taxon>Bacilli</taxon>
        <taxon>Bacillales</taxon>
        <taxon>Bacillaceae</taxon>
        <taxon>Bacillus</taxon>
        <taxon>Bacillus cereus group</taxon>
    </lineage>
</organism>
<comment type="function">
    <text evidence="1">Catalyzes the phosphorylation of D-fructose 6-phosphate to fructose 1,6-bisphosphate by ATP, the first committing step of glycolysis.</text>
</comment>
<comment type="catalytic activity">
    <reaction evidence="1">
        <text>beta-D-fructose 6-phosphate + ATP = beta-D-fructose 1,6-bisphosphate + ADP + H(+)</text>
        <dbReference type="Rhea" id="RHEA:16109"/>
        <dbReference type="ChEBI" id="CHEBI:15378"/>
        <dbReference type="ChEBI" id="CHEBI:30616"/>
        <dbReference type="ChEBI" id="CHEBI:32966"/>
        <dbReference type="ChEBI" id="CHEBI:57634"/>
        <dbReference type="ChEBI" id="CHEBI:456216"/>
        <dbReference type="EC" id="2.7.1.11"/>
    </reaction>
</comment>
<comment type="cofactor">
    <cofactor evidence="1">
        <name>Mg(2+)</name>
        <dbReference type="ChEBI" id="CHEBI:18420"/>
    </cofactor>
</comment>
<comment type="activity regulation">
    <text evidence="1">Allosterically activated by ADP and other diphosphonucleosides, and allosterically inhibited by phosphoenolpyruvate.</text>
</comment>
<comment type="pathway">
    <text evidence="1">Carbohydrate degradation; glycolysis; D-glyceraldehyde 3-phosphate and glycerone phosphate from D-glucose: step 3/4.</text>
</comment>
<comment type="subunit">
    <text evidence="1">Homotetramer.</text>
</comment>
<comment type="subcellular location">
    <subcellularLocation>
        <location evidence="1">Cytoplasm</location>
    </subcellularLocation>
</comment>
<comment type="similarity">
    <text evidence="1">Belongs to the phosphofructokinase type A (PFKA) family. ATP-dependent PFK group I subfamily. Prokaryotic clade 'B1' sub-subfamily.</text>
</comment>
<proteinExistence type="inferred from homology"/>
<keyword id="KW-0021">Allosteric enzyme</keyword>
<keyword id="KW-0067">ATP-binding</keyword>
<keyword id="KW-0963">Cytoplasm</keyword>
<keyword id="KW-0324">Glycolysis</keyword>
<keyword id="KW-0418">Kinase</keyword>
<keyword id="KW-0460">Magnesium</keyword>
<keyword id="KW-0479">Metal-binding</keyword>
<keyword id="KW-0547">Nucleotide-binding</keyword>
<keyword id="KW-0808">Transferase</keyword>
<evidence type="ECO:0000255" key="1">
    <source>
        <dbReference type="HAMAP-Rule" id="MF_00339"/>
    </source>
</evidence>
<feature type="chain" id="PRO_1000192361" description="ATP-dependent 6-phosphofructokinase">
    <location>
        <begin position="1"/>
        <end position="319"/>
    </location>
</feature>
<feature type="active site" description="Proton acceptor" evidence="1">
    <location>
        <position position="127"/>
    </location>
</feature>
<feature type="binding site" evidence="1">
    <location>
        <position position="11"/>
    </location>
    <ligand>
        <name>ATP</name>
        <dbReference type="ChEBI" id="CHEBI:30616"/>
    </ligand>
</feature>
<feature type="binding site" evidence="1">
    <location>
        <begin position="21"/>
        <end position="25"/>
    </location>
    <ligand>
        <name>ADP</name>
        <dbReference type="ChEBI" id="CHEBI:456216"/>
        <note>allosteric activator; ligand shared between dimeric partners</note>
    </ligand>
</feature>
<feature type="binding site" evidence="1">
    <location>
        <begin position="72"/>
        <end position="73"/>
    </location>
    <ligand>
        <name>ATP</name>
        <dbReference type="ChEBI" id="CHEBI:30616"/>
    </ligand>
</feature>
<feature type="binding site" evidence="1">
    <location>
        <begin position="102"/>
        <end position="105"/>
    </location>
    <ligand>
        <name>ATP</name>
        <dbReference type="ChEBI" id="CHEBI:30616"/>
    </ligand>
</feature>
<feature type="binding site" evidence="1">
    <location>
        <position position="103"/>
    </location>
    <ligand>
        <name>Mg(2+)</name>
        <dbReference type="ChEBI" id="CHEBI:18420"/>
        <note>catalytic</note>
    </ligand>
</feature>
<feature type="binding site" description="in other chain" evidence="1">
    <location>
        <begin position="125"/>
        <end position="127"/>
    </location>
    <ligand>
        <name>substrate</name>
        <note>ligand shared between dimeric partners</note>
    </ligand>
</feature>
<feature type="binding site" description="in other chain" evidence="1">
    <location>
        <position position="154"/>
    </location>
    <ligand>
        <name>ADP</name>
        <dbReference type="ChEBI" id="CHEBI:456216"/>
        <note>allosteric activator; ligand shared between dimeric partners</note>
    </ligand>
</feature>
<feature type="binding site" evidence="1">
    <location>
        <position position="162"/>
    </location>
    <ligand>
        <name>substrate</name>
        <note>ligand shared between dimeric partners</note>
    </ligand>
</feature>
<feature type="binding site" description="in other chain" evidence="1">
    <location>
        <begin position="169"/>
        <end position="171"/>
    </location>
    <ligand>
        <name>substrate</name>
        <note>ligand shared between dimeric partners</note>
    </ligand>
</feature>
<feature type="binding site" description="in other chain" evidence="1">
    <location>
        <begin position="185"/>
        <end position="187"/>
    </location>
    <ligand>
        <name>ADP</name>
        <dbReference type="ChEBI" id="CHEBI:456216"/>
        <note>allosteric activator; ligand shared between dimeric partners</note>
    </ligand>
</feature>
<feature type="binding site" description="in other chain" evidence="1">
    <location>
        <position position="211"/>
    </location>
    <ligand>
        <name>ADP</name>
        <dbReference type="ChEBI" id="CHEBI:456216"/>
        <note>allosteric activator; ligand shared between dimeric partners</note>
    </ligand>
</feature>
<feature type="binding site" description="in other chain" evidence="1">
    <location>
        <begin position="213"/>
        <end position="215"/>
    </location>
    <ligand>
        <name>ADP</name>
        <dbReference type="ChEBI" id="CHEBI:456216"/>
        <note>allosteric activator; ligand shared between dimeric partners</note>
    </ligand>
</feature>
<feature type="binding site" description="in other chain" evidence="1">
    <location>
        <position position="222"/>
    </location>
    <ligand>
        <name>substrate</name>
        <note>ligand shared between dimeric partners</note>
    </ligand>
</feature>
<feature type="binding site" evidence="1">
    <location>
        <position position="243"/>
    </location>
    <ligand>
        <name>substrate</name>
        <note>ligand shared between dimeric partners</note>
    </ligand>
</feature>
<feature type="binding site" description="in other chain" evidence="1">
    <location>
        <begin position="249"/>
        <end position="252"/>
    </location>
    <ligand>
        <name>substrate</name>
        <note>ligand shared between dimeric partners</note>
    </ligand>
</feature>
<name>PFKA_BACAC</name>
<accession>C3L8X8</accession>